<comment type="function">
    <text evidence="1">Catalyzes a reversible aldol reaction between acetaldehyde and D-glyceraldehyde 3-phosphate to generate 2-deoxy-D-ribose 5-phosphate.</text>
</comment>
<comment type="catalytic activity">
    <reaction evidence="1">
        <text>2-deoxy-D-ribose 5-phosphate = D-glyceraldehyde 3-phosphate + acetaldehyde</text>
        <dbReference type="Rhea" id="RHEA:12821"/>
        <dbReference type="ChEBI" id="CHEBI:15343"/>
        <dbReference type="ChEBI" id="CHEBI:59776"/>
        <dbReference type="ChEBI" id="CHEBI:62877"/>
        <dbReference type="EC" id="4.1.2.4"/>
    </reaction>
</comment>
<comment type="pathway">
    <text evidence="1">Carbohydrate degradation; 2-deoxy-D-ribose 1-phosphate degradation; D-glyceraldehyde 3-phosphate and acetaldehyde from 2-deoxy-alpha-D-ribose 1-phosphate: step 2/2.</text>
</comment>
<comment type="subcellular location">
    <subcellularLocation>
        <location evidence="1">Cytoplasm</location>
    </subcellularLocation>
</comment>
<comment type="similarity">
    <text evidence="1">Belongs to the DeoC/FbaB aldolase family. DeoC type 1 subfamily.</text>
</comment>
<feature type="chain" id="PRO_1000189832" description="Deoxyribose-phosphate aldolase">
    <location>
        <begin position="1"/>
        <end position="220"/>
    </location>
</feature>
<feature type="active site" description="Proton donor/acceptor" evidence="1">
    <location>
        <position position="89"/>
    </location>
</feature>
<feature type="active site" description="Schiff-base intermediate with acetaldehyde" evidence="1">
    <location>
        <position position="151"/>
    </location>
</feature>
<feature type="active site" description="Proton donor/acceptor" evidence="1">
    <location>
        <position position="180"/>
    </location>
</feature>
<name>DEOC_STACT</name>
<accession>B9DMC3</accession>
<protein>
    <recommendedName>
        <fullName evidence="1">Deoxyribose-phosphate aldolase</fullName>
        <shortName evidence="1">DERA</shortName>
        <ecNumber evidence="1">4.1.2.4</ecNumber>
    </recommendedName>
    <alternativeName>
        <fullName evidence="1">2-deoxy-D-ribose 5-phosphate aldolase</fullName>
    </alternativeName>
    <alternativeName>
        <fullName evidence="1">Phosphodeoxyriboaldolase</fullName>
        <shortName evidence="1">Deoxyriboaldolase</shortName>
    </alternativeName>
</protein>
<sequence length="220" mass="23617">MDYAKYIDHTLLKPDATLDQIDKLIDEAKEYHFKSVCINPTYVKHAAEALKDSDVLVCTVIGFPLGANTSATKAFEVEDAVKNGADELDMIINIGALKDGRYDEVRKDIEAVVKASGDHTVKVIIETVLLTDEEKRKASEISKEAGADFVKTSTGFAGGGATVEDVKLMKEVVGDDLEVKASGGVRNLEDFKAMIDAGATRVGASAGVQIIQGLESDSDY</sequence>
<reference key="1">
    <citation type="journal article" date="2009" name="Appl. Environ. Microbiol.">
        <title>Genome analysis of the meat starter culture bacterium Staphylococcus carnosus TM300.</title>
        <authorList>
            <person name="Rosenstein R."/>
            <person name="Nerz C."/>
            <person name="Biswas L."/>
            <person name="Resch A."/>
            <person name="Raddatz G."/>
            <person name="Schuster S.C."/>
            <person name="Goetz F."/>
        </authorList>
    </citation>
    <scope>NUCLEOTIDE SEQUENCE [LARGE SCALE GENOMIC DNA]</scope>
    <source>
        <strain>TM300</strain>
    </source>
</reference>
<organism>
    <name type="scientific">Staphylococcus carnosus (strain TM300)</name>
    <dbReference type="NCBI Taxonomy" id="396513"/>
    <lineage>
        <taxon>Bacteria</taxon>
        <taxon>Bacillati</taxon>
        <taxon>Bacillota</taxon>
        <taxon>Bacilli</taxon>
        <taxon>Bacillales</taxon>
        <taxon>Staphylococcaceae</taxon>
        <taxon>Staphylococcus</taxon>
    </lineage>
</organism>
<keyword id="KW-0963">Cytoplasm</keyword>
<keyword id="KW-0456">Lyase</keyword>
<keyword id="KW-1185">Reference proteome</keyword>
<keyword id="KW-0704">Schiff base</keyword>
<proteinExistence type="inferred from homology"/>
<dbReference type="EC" id="4.1.2.4" evidence="1"/>
<dbReference type="EMBL" id="AM295250">
    <property type="protein sequence ID" value="CAL28546.1"/>
    <property type="molecule type" value="Genomic_DNA"/>
</dbReference>
<dbReference type="RefSeq" id="WP_015900886.1">
    <property type="nucleotide sequence ID" value="NC_012121.1"/>
</dbReference>
<dbReference type="SMR" id="B9DMC3"/>
<dbReference type="GeneID" id="93794092"/>
<dbReference type="KEGG" id="sca:SCA_1640"/>
<dbReference type="eggNOG" id="COG0274">
    <property type="taxonomic scope" value="Bacteria"/>
</dbReference>
<dbReference type="HOGENOM" id="CLU_053595_0_1_9"/>
<dbReference type="OrthoDB" id="9778711at2"/>
<dbReference type="BioCyc" id="SCAR396513:SCA_RS08325-MONOMER"/>
<dbReference type="UniPathway" id="UPA00002">
    <property type="reaction ID" value="UER00468"/>
</dbReference>
<dbReference type="Proteomes" id="UP000000444">
    <property type="component" value="Chromosome"/>
</dbReference>
<dbReference type="GO" id="GO:0005737">
    <property type="term" value="C:cytoplasm"/>
    <property type="evidence" value="ECO:0007669"/>
    <property type="project" value="UniProtKB-SubCell"/>
</dbReference>
<dbReference type="GO" id="GO:0004139">
    <property type="term" value="F:deoxyribose-phosphate aldolase activity"/>
    <property type="evidence" value="ECO:0007669"/>
    <property type="project" value="UniProtKB-UniRule"/>
</dbReference>
<dbReference type="GO" id="GO:0006018">
    <property type="term" value="P:2-deoxyribose 1-phosphate catabolic process"/>
    <property type="evidence" value="ECO:0007669"/>
    <property type="project" value="UniProtKB-UniRule"/>
</dbReference>
<dbReference type="GO" id="GO:0016052">
    <property type="term" value="P:carbohydrate catabolic process"/>
    <property type="evidence" value="ECO:0007669"/>
    <property type="project" value="TreeGrafter"/>
</dbReference>
<dbReference type="GO" id="GO:0009264">
    <property type="term" value="P:deoxyribonucleotide catabolic process"/>
    <property type="evidence" value="ECO:0007669"/>
    <property type="project" value="InterPro"/>
</dbReference>
<dbReference type="CDD" id="cd00959">
    <property type="entry name" value="DeoC"/>
    <property type="match status" value="1"/>
</dbReference>
<dbReference type="FunFam" id="3.20.20.70:FF:000044">
    <property type="entry name" value="Deoxyribose-phosphate aldolase"/>
    <property type="match status" value="1"/>
</dbReference>
<dbReference type="Gene3D" id="3.20.20.70">
    <property type="entry name" value="Aldolase class I"/>
    <property type="match status" value="1"/>
</dbReference>
<dbReference type="HAMAP" id="MF_00114">
    <property type="entry name" value="DeoC_type1"/>
    <property type="match status" value="1"/>
</dbReference>
<dbReference type="InterPro" id="IPR013785">
    <property type="entry name" value="Aldolase_TIM"/>
</dbReference>
<dbReference type="InterPro" id="IPR011343">
    <property type="entry name" value="DeoC"/>
</dbReference>
<dbReference type="InterPro" id="IPR002915">
    <property type="entry name" value="DeoC/FbaB/LacD_aldolase"/>
</dbReference>
<dbReference type="InterPro" id="IPR028581">
    <property type="entry name" value="DeoC_typeI"/>
</dbReference>
<dbReference type="NCBIfam" id="TIGR00126">
    <property type="entry name" value="deoC"/>
    <property type="match status" value="1"/>
</dbReference>
<dbReference type="PANTHER" id="PTHR10889">
    <property type="entry name" value="DEOXYRIBOSE-PHOSPHATE ALDOLASE"/>
    <property type="match status" value="1"/>
</dbReference>
<dbReference type="PANTHER" id="PTHR10889:SF1">
    <property type="entry name" value="DEOXYRIBOSE-PHOSPHATE ALDOLASE"/>
    <property type="match status" value="1"/>
</dbReference>
<dbReference type="Pfam" id="PF01791">
    <property type="entry name" value="DeoC"/>
    <property type="match status" value="1"/>
</dbReference>
<dbReference type="PIRSF" id="PIRSF001357">
    <property type="entry name" value="DeoC"/>
    <property type="match status" value="1"/>
</dbReference>
<dbReference type="SMART" id="SM01133">
    <property type="entry name" value="DeoC"/>
    <property type="match status" value="1"/>
</dbReference>
<dbReference type="SUPFAM" id="SSF51569">
    <property type="entry name" value="Aldolase"/>
    <property type="match status" value="1"/>
</dbReference>
<evidence type="ECO:0000255" key="1">
    <source>
        <dbReference type="HAMAP-Rule" id="MF_00114"/>
    </source>
</evidence>
<gene>
    <name evidence="1" type="primary">deoC</name>
    <name type="ordered locus">Sca_1640</name>
</gene>